<keyword id="KW-0223">Dioxygenase</keyword>
<keyword id="KW-0349">Heme</keyword>
<keyword id="KW-0408">Iron</keyword>
<keyword id="KW-0479">Metal-binding</keyword>
<keyword id="KW-0560">Oxidoreductase</keyword>
<keyword id="KW-0823">Tryptophan catabolism</keyword>
<evidence type="ECO:0000255" key="1">
    <source>
        <dbReference type="HAMAP-Rule" id="MF_01972"/>
    </source>
</evidence>
<reference key="1">
    <citation type="journal article" date="2006" name="Proc. Natl. Acad. Sci. U.S.A.">
        <title>The complete genome of Rhodococcus sp. RHA1 provides insights into a catabolic powerhouse.</title>
        <authorList>
            <person name="McLeod M.P."/>
            <person name="Warren R.L."/>
            <person name="Hsiao W.W.L."/>
            <person name="Araki N."/>
            <person name="Myhre M."/>
            <person name="Fernandes C."/>
            <person name="Miyazawa D."/>
            <person name="Wong W."/>
            <person name="Lillquist A.L."/>
            <person name="Wang D."/>
            <person name="Dosanjh M."/>
            <person name="Hara H."/>
            <person name="Petrescu A."/>
            <person name="Morin R.D."/>
            <person name="Yang G."/>
            <person name="Stott J.M."/>
            <person name="Schein J.E."/>
            <person name="Shin H."/>
            <person name="Smailus D."/>
            <person name="Siddiqui A.S."/>
            <person name="Marra M.A."/>
            <person name="Jones S.J.M."/>
            <person name="Holt R."/>
            <person name="Brinkman F.S.L."/>
            <person name="Miyauchi K."/>
            <person name="Fukuda M."/>
            <person name="Davies J.E."/>
            <person name="Mohn W.W."/>
            <person name="Eltis L.D."/>
        </authorList>
    </citation>
    <scope>NUCLEOTIDE SEQUENCE [LARGE SCALE GENOMIC DNA]</scope>
    <source>
        <strain>RHA1</strain>
    </source>
</reference>
<protein>
    <recommendedName>
        <fullName evidence="1">Tryptophan 2,3-dioxygenase</fullName>
        <shortName evidence="1">TDO</shortName>
        <ecNumber evidence="1">1.13.11.11</ecNumber>
    </recommendedName>
    <alternativeName>
        <fullName evidence="1">Tryptamin 2,3-dioxygenase</fullName>
    </alternativeName>
    <alternativeName>
        <fullName evidence="1">Tryptophan oxygenase</fullName>
        <shortName evidence="1">TO</shortName>
        <shortName evidence="1">TRPO</shortName>
    </alternativeName>
    <alternativeName>
        <fullName evidence="1">Tryptophan pyrrolase</fullName>
    </alternativeName>
    <alternativeName>
        <fullName evidence="1">Tryptophanase</fullName>
    </alternativeName>
</protein>
<sequence>MGVQANTRAIEKDIVTDFSERMSYASYLDLDTLLSAQKPVSRPEHHDELLFIIQHQTTELWLKLVLHETLAARAAFDEDDIGRALKCVARVKHIQKTLTEQWSVLATLTPTEYSEFRRFLGNSSGFQSYQYRAVEFVLGNKNAGMLAVFEADPAAHDLLGRLLAEPSLYDAFWQCLSRLGYDVPASALDRDVTAAYTLNEDLLPLIKFVYENHDEHWAVYEAFEEFVDLEENFQLWRFRHMRTVLRTIGMKSGTGGSSGVGFLQKALDLTFFPELLAVRTEIGR</sequence>
<proteinExistence type="inferred from homology"/>
<accession>Q0SFS2</accession>
<feature type="chain" id="PRO_0000360131" description="Tryptophan 2,3-dioxygenase">
    <location>
        <begin position="1"/>
        <end position="284"/>
    </location>
</feature>
<feature type="binding site" evidence="1">
    <location>
        <begin position="51"/>
        <end position="55"/>
    </location>
    <ligand>
        <name>substrate</name>
    </ligand>
</feature>
<feature type="binding site" evidence="1">
    <location>
        <position position="113"/>
    </location>
    <ligand>
        <name>substrate</name>
    </ligand>
</feature>
<feature type="binding site" evidence="1">
    <location>
        <position position="117"/>
    </location>
    <ligand>
        <name>substrate</name>
    </ligand>
</feature>
<feature type="binding site" description="axial binding residue" evidence="1">
    <location>
        <position position="240"/>
    </location>
    <ligand>
        <name>heme</name>
        <dbReference type="ChEBI" id="CHEBI:30413"/>
    </ligand>
    <ligandPart>
        <name>Fe</name>
        <dbReference type="ChEBI" id="CHEBI:18248"/>
    </ligandPart>
</feature>
<feature type="binding site" evidence="1">
    <location>
        <position position="254"/>
    </location>
    <ligand>
        <name>substrate</name>
    </ligand>
</feature>
<comment type="function">
    <text evidence="1">Heme-dependent dioxygenase that catalyzes the oxidative cleavage of the L-tryptophan (L-Trp) pyrrole ring and converts L-tryptophan to N-formyl-L-kynurenine. Catalyzes the oxidative cleavage of the indole moiety.</text>
</comment>
<comment type="catalytic activity">
    <reaction evidence="1">
        <text>L-tryptophan + O2 = N-formyl-L-kynurenine</text>
        <dbReference type="Rhea" id="RHEA:24536"/>
        <dbReference type="ChEBI" id="CHEBI:15379"/>
        <dbReference type="ChEBI" id="CHEBI:57912"/>
        <dbReference type="ChEBI" id="CHEBI:58629"/>
        <dbReference type="EC" id="1.13.11.11"/>
    </reaction>
</comment>
<comment type="cofactor">
    <cofactor evidence="1">
        <name>heme</name>
        <dbReference type="ChEBI" id="CHEBI:30413"/>
    </cofactor>
    <text evidence="1">Binds 1 heme group per subunit.</text>
</comment>
<comment type="pathway">
    <text evidence="1">Amino-acid degradation; L-tryptophan degradation via kynurenine pathway; L-kynurenine from L-tryptophan: step 1/2.</text>
</comment>
<comment type="subunit">
    <text evidence="1">Homotetramer.</text>
</comment>
<comment type="similarity">
    <text evidence="1">Belongs to the tryptophan 2,3-dioxygenase family.</text>
</comment>
<organism>
    <name type="scientific">Rhodococcus jostii (strain RHA1)</name>
    <dbReference type="NCBI Taxonomy" id="101510"/>
    <lineage>
        <taxon>Bacteria</taxon>
        <taxon>Bacillati</taxon>
        <taxon>Actinomycetota</taxon>
        <taxon>Actinomycetes</taxon>
        <taxon>Mycobacteriales</taxon>
        <taxon>Nocardiaceae</taxon>
        <taxon>Rhodococcus</taxon>
    </lineage>
</organism>
<gene>
    <name evidence="1" type="primary">kynA</name>
    <name type="ordered locus">RHA1_ro01801</name>
</gene>
<dbReference type="EC" id="1.13.11.11" evidence="1"/>
<dbReference type="EMBL" id="CP000431">
    <property type="protein sequence ID" value="ABG93614.1"/>
    <property type="molecule type" value="Genomic_DNA"/>
</dbReference>
<dbReference type="RefSeq" id="WP_011594726.1">
    <property type="nucleotide sequence ID" value="NC_008268.1"/>
</dbReference>
<dbReference type="SMR" id="Q0SFS2"/>
<dbReference type="KEGG" id="rha:RHA1_ro01801"/>
<dbReference type="PATRIC" id="fig|101510.16.peg.1820"/>
<dbReference type="eggNOG" id="COG3483">
    <property type="taxonomic scope" value="Bacteria"/>
</dbReference>
<dbReference type="HOGENOM" id="CLU_063240_0_0_11"/>
<dbReference type="OrthoDB" id="9776847at2"/>
<dbReference type="UniPathway" id="UPA00333">
    <property type="reaction ID" value="UER00453"/>
</dbReference>
<dbReference type="Proteomes" id="UP000008710">
    <property type="component" value="Chromosome"/>
</dbReference>
<dbReference type="GO" id="GO:0020037">
    <property type="term" value="F:heme binding"/>
    <property type="evidence" value="ECO:0000250"/>
    <property type="project" value="UniProtKB"/>
</dbReference>
<dbReference type="GO" id="GO:0046872">
    <property type="term" value="F:metal ion binding"/>
    <property type="evidence" value="ECO:0007669"/>
    <property type="project" value="UniProtKB-KW"/>
</dbReference>
<dbReference type="GO" id="GO:0004833">
    <property type="term" value="F:tryptophan 2,3-dioxygenase activity"/>
    <property type="evidence" value="ECO:0000250"/>
    <property type="project" value="UniProtKB"/>
</dbReference>
<dbReference type="GO" id="GO:0019442">
    <property type="term" value="P:L-tryptophan catabolic process to acetyl-CoA"/>
    <property type="evidence" value="ECO:0007669"/>
    <property type="project" value="TreeGrafter"/>
</dbReference>
<dbReference type="GO" id="GO:0019441">
    <property type="term" value="P:L-tryptophan catabolic process to kynurenine"/>
    <property type="evidence" value="ECO:0000250"/>
    <property type="project" value="UniProtKB"/>
</dbReference>
<dbReference type="FunFam" id="1.20.58.480:FF:000001">
    <property type="entry name" value="Tryptophan 2,3-dioxygenase"/>
    <property type="match status" value="1"/>
</dbReference>
<dbReference type="Gene3D" id="1.20.58.480">
    <property type="match status" value="1"/>
</dbReference>
<dbReference type="HAMAP" id="MF_01972">
    <property type="entry name" value="T23O"/>
    <property type="match status" value="1"/>
</dbReference>
<dbReference type="InterPro" id="IPR037217">
    <property type="entry name" value="Trp/Indoleamine_2_3_dOase-like"/>
</dbReference>
<dbReference type="InterPro" id="IPR004981">
    <property type="entry name" value="Trp_2_3_dOase"/>
</dbReference>
<dbReference type="PANTHER" id="PTHR10138">
    <property type="entry name" value="TRYPTOPHAN 2,3-DIOXYGENASE"/>
    <property type="match status" value="1"/>
</dbReference>
<dbReference type="PANTHER" id="PTHR10138:SF0">
    <property type="entry name" value="TRYPTOPHAN 2,3-DIOXYGENASE"/>
    <property type="match status" value="1"/>
</dbReference>
<dbReference type="Pfam" id="PF03301">
    <property type="entry name" value="Trp_dioxygenase"/>
    <property type="match status" value="2"/>
</dbReference>
<dbReference type="SUPFAM" id="SSF140959">
    <property type="entry name" value="Indolic compounds 2,3-dioxygenase-like"/>
    <property type="match status" value="1"/>
</dbReference>
<name>T23O_RHOJR</name>